<proteinExistence type="evidence at transcript level"/>
<comment type="function">
    <text evidence="1 2 3">Multifunctional protein with various roles in different cellular compartments. May act in a redox sensitive manner. In the nucleus is an abundant chromatin-associated non-histone protein involved in transcription, chromatin remodeling and V(D)J recombination and probably other processes (By similarity). Binds DNA with a preference to non-canonical DNA structures such as single-stranded DNA. Can bent DNA and enhance DNA flexibility by looping thus providing a mechanism to promote activities on various gene promoters by enhancing transcription factor binding and/or bringing distant regulatory sequences into close proximity. Involved in V(D)J recombination by acting as a cofactor of the RAG complex: acts by stimulating cleavage and RAG protein binding at the 23 bp spacer of conserved recombination signal sequences (RSS). Proposed to be involved in the innate immune response to nucleic acids by acting as a cytoplasmic promiscuous immunogenic DNA/RNA sensor which cooperates with subsequent discriminative sensing by specific pattern recognition receptors. In the extracellular compartment acts as a chemokine. Promotes proliferation and migration of endothelial cells implicating AGER/RAGE. Has antimicrobial activity in gastrointestinal epithelial tissues. Involved in inflammatory response to antigenic stimulus coupled with pro-inflammatory activity. May play a role in germ cell differentiation. Involved in modulation of neurogenesis probably by regulation of neural stem proliferation. Involved in articular cartilage surface maintenance implicating LEF1 and the Wnt/beta-catenin pathway (By similarity).</text>
</comment>
<comment type="subunit">
    <text evidence="2 3">Interacts with POU2F2, POU2F1 and POU3F1. Component of the RAG complex composed of core components RAG1 and RAG2, and associated component HMGB1 or HMGB2. Component of the SET complex, composed of at least ANP32A, APEX1, HMGB2, NME1, SET and TREX1. Directly interacts with SET. Interacts with LEF1.</text>
</comment>
<comment type="subcellular location">
    <subcellularLocation>
        <location evidence="2 6">Nucleus</location>
    </subcellularLocation>
    <subcellularLocation>
        <location evidence="2">Chromosome</location>
    </subcellularLocation>
    <subcellularLocation>
        <location evidence="2 3">Cytoplasm</location>
    </subcellularLocation>
    <subcellularLocation>
        <location evidence="2">Secreted</location>
    </subcellularLocation>
</comment>
<comment type="domain">
    <text evidence="2">Both, HMG box 1 and HMG box 2, show antimicrobial activity.</text>
</comment>
<comment type="PTM">
    <text evidence="1">Reduction/oxidation of cysteine residues Cys-23, Cys-45 and Cys-106 and a possible intramolecular disulfide bond involving Cys-23 and Cys-45 give rise to different redox forms with specific functional activities in various cellular compartments: 1- fully reduced HMGB2 (HMGB2C23hC45hC106h), 2- disulfide HMGB2 (HMGB2C23-C45C106h) and 3- sulfonyl HMGB2 (HMGB2C23soC45soC106so).</text>
</comment>
<comment type="similarity">
    <text evidence="8">Belongs to the HMGB family.</text>
</comment>
<gene>
    <name type="primary">Hmgb2</name>
    <name type="synonym">Hmg2</name>
</gene>
<dbReference type="EMBL" id="D84418">
    <property type="protein sequence ID" value="BAA12350.1"/>
    <property type="molecule type" value="mRNA"/>
</dbReference>
<dbReference type="EMBL" id="BC078866">
    <property type="protein sequence ID" value="AAH78866.1"/>
    <property type="molecule type" value="mRNA"/>
</dbReference>
<dbReference type="EMBL" id="BC089854">
    <property type="protein sequence ID" value="AAH89854.1"/>
    <property type="molecule type" value="mRNA"/>
</dbReference>
<dbReference type="EMBL" id="BC107455">
    <property type="protein sequence ID" value="AAI07456.1"/>
    <property type="molecule type" value="mRNA"/>
</dbReference>
<dbReference type="RefSeq" id="NP_001316810.1">
    <property type="nucleotide sequence ID" value="NM_001329881.1"/>
</dbReference>
<dbReference type="RefSeq" id="NP_058883.1">
    <property type="nucleotide sequence ID" value="NM_017187.2"/>
</dbReference>
<dbReference type="RefSeq" id="XP_017455541.1">
    <property type="nucleotide sequence ID" value="XM_017600052.3"/>
</dbReference>
<dbReference type="SMR" id="P52925"/>
<dbReference type="FunCoup" id="P52925">
    <property type="interactions" value="881"/>
</dbReference>
<dbReference type="STRING" id="10116.ENSRNOP00000017635"/>
<dbReference type="iPTMnet" id="P52925"/>
<dbReference type="PhosphoSitePlus" id="P52925"/>
<dbReference type="jPOST" id="P52925"/>
<dbReference type="PaxDb" id="10116-ENSRNOP00000017635"/>
<dbReference type="DNASU" id="29395"/>
<dbReference type="Ensembl" id="ENSRNOT00000017635.7">
    <property type="protein sequence ID" value="ENSRNOP00000017635.4"/>
    <property type="gene ID" value="ENSRNOG00000013167.7"/>
</dbReference>
<dbReference type="Ensembl" id="ENSRNOT00000046874.3">
    <property type="protein sequence ID" value="ENSRNOP00000039358.2"/>
    <property type="gene ID" value="ENSRNOG00000033321.3"/>
</dbReference>
<dbReference type="GeneID" id="29395"/>
<dbReference type="GeneID" id="498072"/>
<dbReference type="KEGG" id="rno:29395"/>
<dbReference type="KEGG" id="rno:498072"/>
<dbReference type="UCSC" id="RGD:69291">
    <property type="organism name" value="rat"/>
</dbReference>
<dbReference type="AGR" id="RGD:1564519"/>
<dbReference type="AGR" id="RGD:69291"/>
<dbReference type="CTD" id="3148"/>
<dbReference type="CTD" id="498072"/>
<dbReference type="RGD" id="69291">
    <property type="gene designation" value="Hmgb2"/>
</dbReference>
<dbReference type="eggNOG" id="KOG0381">
    <property type="taxonomic scope" value="Eukaryota"/>
</dbReference>
<dbReference type="GeneTree" id="ENSGT00940000154466"/>
<dbReference type="HOGENOM" id="CLU_082854_0_0_1"/>
<dbReference type="InParanoid" id="P52925"/>
<dbReference type="OMA" id="YAYFVAT"/>
<dbReference type="OrthoDB" id="1919336at2759"/>
<dbReference type="PhylomeDB" id="P52925"/>
<dbReference type="TreeFam" id="TF105371"/>
<dbReference type="Reactome" id="R-RNO-140342">
    <property type="pathway name" value="Apoptosis induced DNA fragmentation"/>
</dbReference>
<dbReference type="PRO" id="PR:P52925"/>
<dbReference type="Proteomes" id="UP000002494">
    <property type="component" value="Chromosome 11"/>
</dbReference>
<dbReference type="Proteomes" id="UP000002494">
    <property type="component" value="Chromosome 16"/>
</dbReference>
<dbReference type="Bgee" id="ENSRNOG00000013167">
    <property type="expression patterns" value="Expressed in thymus and 19 other cell types or tissues"/>
</dbReference>
<dbReference type="GO" id="GO:0000785">
    <property type="term" value="C:chromatin"/>
    <property type="evidence" value="ECO:0000250"/>
    <property type="project" value="AgBase"/>
</dbReference>
<dbReference type="GO" id="GO:0000793">
    <property type="term" value="C:condensed chromosome"/>
    <property type="evidence" value="ECO:0000250"/>
    <property type="project" value="UniProtKB"/>
</dbReference>
<dbReference type="GO" id="GO:0005737">
    <property type="term" value="C:cytoplasm"/>
    <property type="evidence" value="ECO:0000250"/>
    <property type="project" value="UniProtKB"/>
</dbReference>
<dbReference type="GO" id="GO:0005615">
    <property type="term" value="C:extracellular space"/>
    <property type="evidence" value="ECO:0000250"/>
    <property type="project" value="AgBase"/>
</dbReference>
<dbReference type="GO" id="GO:0005634">
    <property type="term" value="C:nucleus"/>
    <property type="evidence" value="ECO:0000250"/>
    <property type="project" value="UniProtKB"/>
</dbReference>
<dbReference type="GO" id="GO:0048471">
    <property type="term" value="C:perinuclear region of cytoplasm"/>
    <property type="evidence" value="ECO:0000250"/>
    <property type="project" value="UniProtKB"/>
</dbReference>
<dbReference type="GO" id="GO:0032991">
    <property type="term" value="C:protein-containing complex"/>
    <property type="evidence" value="ECO:0000266"/>
    <property type="project" value="RGD"/>
</dbReference>
<dbReference type="GO" id="GO:0042056">
    <property type="term" value="F:chemoattractant activity"/>
    <property type="evidence" value="ECO:0000266"/>
    <property type="project" value="RGD"/>
</dbReference>
<dbReference type="GO" id="GO:0000987">
    <property type="term" value="F:cis-regulatory region sequence-specific DNA binding"/>
    <property type="evidence" value="ECO:0000250"/>
    <property type="project" value="AgBase"/>
</dbReference>
<dbReference type="GO" id="GO:0003684">
    <property type="term" value="F:damaged DNA binding"/>
    <property type="evidence" value="ECO:0000266"/>
    <property type="project" value="RGD"/>
</dbReference>
<dbReference type="GO" id="GO:0003677">
    <property type="term" value="F:DNA binding"/>
    <property type="evidence" value="ECO:0000250"/>
    <property type="project" value="AgBase"/>
</dbReference>
<dbReference type="GO" id="GO:0008301">
    <property type="term" value="F:DNA binding, bending"/>
    <property type="evidence" value="ECO:0000250"/>
    <property type="project" value="UniProtKB"/>
</dbReference>
<dbReference type="GO" id="GO:0140297">
    <property type="term" value="F:DNA-binding transcription factor binding"/>
    <property type="evidence" value="ECO:0000266"/>
    <property type="project" value="RGD"/>
</dbReference>
<dbReference type="GO" id="GO:0003690">
    <property type="term" value="F:double-stranded DNA binding"/>
    <property type="evidence" value="ECO:0000250"/>
    <property type="project" value="AgBase"/>
</dbReference>
<dbReference type="GO" id="GO:0008289">
    <property type="term" value="F:lipid binding"/>
    <property type="evidence" value="ECO:0000314"/>
    <property type="project" value="RGD"/>
</dbReference>
<dbReference type="GO" id="GO:0044378">
    <property type="term" value="F:non-sequence-specific DNA binding, bending"/>
    <property type="evidence" value="ECO:0000250"/>
    <property type="project" value="AgBase"/>
</dbReference>
<dbReference type="GO" id="GO:0019904">
    <property type="term" value="F:protein domain specific binding"/>
    <property type="evidence" value="ECO:0000266"/>
    <property type="project" value="RGD"/>
</dbReference>
<dbReference type="GO" id="GO:0050786">
    <property type="term" value="F:RAGE receptor binding"/>
    <property type="evidence" value="ECO:0000266"/>
    <property type="project" value="RGD"/>
</dbReference>
<dbReference type="GO" id="GO:0003697">
    <property type="term" value="F:single-stranded DNA binding"/>
    <property type="evidence" value="ECO:0000250"/>
    <property type="project" value="AgBase"/>
</dbReference>
<dbReference type="GO" id="GO:0097100">
    <property type="term" value="F:supercoiled DNA binding"/>
    <property type="evidence" value="ECO:0000250"/>
    <property type="project" value="AgBase"/>
</dbReference>
<dbReference type="GO" id="GO:0000976">
    <property type="term" value="F:transcription cis-regulatory region binding"/>
    <property type="evidence" value="ECO:0000266"/>
    <property type="project" value="RGD"/>
</dbReference>
<dbReference type="GO" id="GO:0003713">
    <property type="term" value="F:transcription coactivator activity"/>
    <property type="evidence" value="ECO:0000266"/>
    <property type="project" value="RGD"/>
</dbReference>
<dbReference type="GO" id="GO:0008134">
    <property type="term" value="F:transcription factor binding"/>
    <property type="evidence" value="ECO:0000250"/>
    <property type="project" value="AgBase"/>
</dbReference>
<dbReference type="GO" id="GO:0031100">
    <property type="term" value="P:animal organ regeneration"/>
    <property type="evidence" value="ECO:0000270"/>
    <property type="project" value="RGD"/>
</dbReference>
<dbReference type="GO" id="GO:0060326">
    <property type="term" value="P:cell chemotaxis"/>
    <property type="evidence" value="ECO:0000266"/>
    <property type="project" value="RGD"/>
</dbReference>
<dbReference type="GO" id="GO:0071222">
    <property type="term" value="P:cellular response to lipopolysaccharide"/>
    <property type="evidence" value="ECO:0000266"/>
    <property type="project" value="RGD"/>
</dbReference>
<dbReference type="GO" id="GO:0050829">
    <property type="term" value="P:defense response to Gram-negative bacterium"/>
    <property type="evidence" value="ECO:0000250"/>
    <property type="project" value="AgBase"/>
</dbReference>
<dbReference type="GO" id="GO:0050830">
    <property type="term" value="P:defense response to Gram-positive bacterium"/>
    <property type="evidence" value="ECO:0000250"/>
    <property type="project" value="AgBase"/>
</dbReference>
<dbReference type="GO" id="GO:0006310">
    <property type="term" value="P:DNA recombination"/>
    <property type="evidence" value="ECO:0007669"/>
    <property type="project" value="UniProtKB-KW"/>
</dbReference>
<dbReference type="GO" id="GO:0006265">
    <property type="term" value="P:DNA topological change"/>
    <property type="evidence" value="ECO:0000250"/>
    <property type="project" value="AgBase"/>
</dbReference>
<dbReference type="GO" id="GO:0006303">
    <property type="term" value="P:double-strand break repair via nonhomologous end joining"/>
    <property type="evidence" value="ECO:0000266"/>
    <property type="project" value="RGD"/>
</dbReference>
<dbReference type="GO" id="GO:0008625">
    <property type="term" value="P:extrinsic apoptotic signaling pathway via death domain receptors"/>
    <property type="evidence" value="ECO:0000266"/>
    <property type="project" value="RGD"/>
</dbReference>
<dbReference type="GO" id="GO:0002437">
    <property type="term" value="P:inflammatory response to antigenic stimulus"/>
    <property type="evidence" value="ECO:0000250"/>
    <property type="project" value="AgBase"/>
</dbReference>
<dbReference type="GO" id="GO:0045087">
    <property type="term" value="P:innate immune response"/>
    <property type="evidence" value="ECO:0007669"/>
    <property type="project" value="UniProtKB-KW"/>
</dbReference>
<dbReference type="GO" id="GO:0008584">
    <property type="term" value="P:male gonad development"/>
    <property type="evidence" value="ECO:0000266"/>
    <property type="project" value="RGD"/>
</dbReference>
<dbReference type="GO" id="GO:0045892">
    <property type="term" value="P:negative regulation of DNA-templated transcription"/>
    <property type="evidence" value="ECO:0000266"/>
    <property type="project" value="RGD"/>
</dbReference>
<dbReference type="GO" id="GO:1902042">
    <property type="term" value="P:negative regulation of extrinsic apoptotic signaling pathway via death domain receptors"/>
    <property type="evidence" value="ECO:0000266"/>
    <property type="project" value="RGD"/>
</dbReference>
<dbReference type="GO" id="GO:0010629">
    <property type="term" value="P:negative regulation of gene expression"/>
    <property type="evidence" value="ECO:0000250"/>
    <property type="project" value="AgBase"/>
</dbReference>
<dbReference type="GO" id="GO:0000122">
    <property type="term" value="P:negative regulation of transcription by RNA polymerase II"/>
    <property type="evidence" value="ECO:0000266"/>
    <property type="project" value="RGD"/>
</dbReference>
<dbReference type="GO" id="GO:0007399">
    <property type="term" value="P:nervous system development"/>
    <property type="evidence" value="ECO:0000314"/>
    <property type="project" value="RGD"/>
</dbReference>
<dbReference type="GO" id="GO:0006334">
    <property type="term" value="P:nucleosome assembly"/>
    <property type="evidence" value="ECO:0000266"/>
    <property type="project" value="RGD"/>
</dbReference>
<dbReference type="GO" id="GO:0051054">
    <property type="term" value="P:positive regulation of DNA metabolic process"/>
    <property type="evidence" value="ECO:0000315"/>
    <property type="project" value="RGD"/>
</dbReference>
<dbReference type="GO" id="GO:0045893">
    <property type="term" value="P:positive regulation of DNA-templated transcription"/>
    <property type="evidence" value="ECO:0000315"/>
    <property type="project" value="RGD"/>
</dbReference>
<dbReference type="GO" id="GO:0001938">
    <property type="term" value="P:positive regulation of endothelial cell proliferation"/>
    <property type="evidence" value="ECO:0000266"/>
    <property type="project" value="RGD"/>
</dbReference>
<dbReference type="GO" id="GO:0045648">
    <property type="term" value="P:positive regulation of erythrocyte differentiation"/>
    <property type="evidence" value="ECO:0000266"/>
    <property type="project" value="RGD"/>
</dbReference>
<dbReference type="GO" id="GO:0010628">
    <property type="term" value="P:positive regulation of gene expression"/>
    <property type="evidence" value="ECO:0000250"/>
    <property type="project" value="AgBase"/>
</dbReference>
<dbReference type="GO" id="GO:0045089">
    <property type="term" value="P:positive regulation of innate immune response"/>
    <property type="evidence" value="ECO:0000266"/>
    <property type="project" value="RGD"/>
</dbReference>
<dbReference type="GO" id="GO:0032728">
    <property type="term" value="P:positive regulation of interferon-beta production"/>
    <property type="evidence" value="ECO:0000266"/>
    <property type="project" value="RGD"/>
</dbReference>
<dbReference type="GO" id="GO:0045654">
    <property type="term" value="P:positive regulation of megakaryocyte differentiation"/>
    <property type="evidence" value="ECO:0000266"/>
    <property type="project" value="RGD"/>
</dbReference>
<dbReference type="GO" id="GO:0045944">
    <property type="term" value="P:positive regulation of transcription by RNA polymerase II"/>
    <property type="evidence" value="ECO:0000266"/>
    <property type="project" value="RGD"/>
</dbReference>
<dbReference type="GO" id="GO:0050767">
    <property type="term" value="P:regulation of neurogenesis"/>
    <property type="evidence" value="ECO:0000250"/>
    <property type="project" value="AgBase"/>
</dbReference>
<dbReference type="GO" id="GO:0072091">
    <property type="term" value="P:regulation of stem cell proliferation"/>
    <property type="evidence" value="ECO:0000250"/>
    <property type="project" value="AgBase"/>
</dbReference>
<dbReference type="GO" id="GO:0006357">
    <property type="term" value="P:regulation of transcription by RNA polymerase II"/>
    <property type="evidence" value="ECO:0000250"/>
    <property type="project" value="UniProtKB"/>
</dbReference>
<dbReference type="GO" id="GO:0032496">
    <property type="term" value="P:response to lipopolysaccharide"/>
    <property type="evidence" value="ECO:0000250"/>
    <property type="project" value="AgBase"/>
</dbReference>
<dbReference type="GO" id="GO:0048545">
    <property type="term" value="P:response to steroid hormone"/>
    <property type="evidence" value="ECO:0000266"/>
    <property type="project" value="RGD"/>
</dbReference>
<dbReference type="GO" id="GO:0007289">
    <property type="term" value="P:spermatid nucleus differentiation"/>
    <property type="evidence" value="ECO:0000266"/>
    <property type="project" value="RGD"/>
</dbReference>
<dbReference type="GO" id="GO:0007283">
    <property type="term" value="P:spermatogenesis"/>
    <property type="evidence" value="ECO:0000266"/>
    <property type="project" value="RGD"/>
</dbReference>
<dbReference type="CDD" id="cd21978">
    <property type="entry name" value="HMG-box_HMGB_rpt1"/>
    <property type="match status" value="1"/>
</dbReference>
<dbReference type="CDD" id="cd21979">
    <property type="entry name" value="HMG-box_HMGB_rpt2"/>
    <property type="match status" value="1"/>
</dbReference>
<dbReference type="FunFam" id="1.10.30.10:FF:000006">
    <property type="entry name" value="High mobility group protein B1"/>
    <property type="match status" value="1"/>
</dbReference>
<dbReference type="FunFam" id="1.10.30.10:FF:000018">
    <property type="entry name" value="High mobility group protein B2"/>
    <property type="match status" value="1"/>
</dbReference>
<dbReference type="Gene3D" id="1.10.30.10">
    <property type="entry name" value="High mobility group box domain"/>
    <property type="match status" value="2"/>
</dbReference>
<dbReference type="InterPro" id="IPR009071">
    <property type="entry name" value="HMG_box_dom"/>
</dbReference>
<dbReference type="InterPro" id="IPR036910">
    <property type="entry name" value="HMG_box_dom_sf"/>
</dbReference>
<dbReference type="InterPro" id="IPR017967">
    <property type="entry name" value="HMG_boxA_CS"/>
</dbReference>
<dbReference type="InterPro" id="IPR050342">
    <property type="entry name" value="HMGB"/>
</dbReference>
<dbReference type="PANTHER" id="PTHR48112:SF3">
    <property type="entry name" value="HIGH MOBILITY GROUP PROTEIN B2"/>
    <property type="match status" value="1"/>
</dbReference>
<dbReference type="PANTHER" id="PTHR48112">
    <property type="entry name" value="HIGH MOBILITY GROUP PROTEIN DSP1"/>
    <property type="match status" value="1"/>
</dbReference>
<dbReference type="Pfam" id="PF00505">
    <property type="entry name" value="HMG_box"/>
    <property type="match status" value="1"/>
</dbReference>
<dbReference type="Pfam" id="PF09011">
    <property type="entry name" value="HMG_box_2"/>
    <property type="match status" value="1"/>
</dbReference>
<dbReference type="PRINTS" id="PR00886">
    <property type="entry name" value="HIGHMOBLTY12"/>
</dbReference>
<dbReference type="SMART" id="SM00398">
    <property type="entry name" value="HMG"/>
    <property type="match status" value="2"/>
</dbReference>
<dbReference type="SUPFAM" id="SSF47095">
    <property type="entry name" value="HMG-box"/>
    <property type="match status" value="2"/>
</dbReference>
<dbReference type="PROSITE" id="PS00353">
    <property type="entry name" value="HMG_BOX_1"/>
    <property type="match status" value="1"/>
</dbReference>
<dbReference type="PROSITE" id="PS50118">
    <property type="entry name" value="HMG_BOX_2"/>
    <property type="match status" value="2"/>
</dbReference>
<sequence>MGKGDPNKPRGKMSSYAFFVQTCREEHKKKHPDSSVNFAEFSKKCSERWKTMSAKEKSKFEDLAKSDKARYDREMKNYVPPKGDKKGKKKDPNAPKRPPSAFFLFCSEHRPKIKSEHPGLSIGDTAKKLGEMWSEQSAKDKQPYEQKAAKLKEKYEKDIAAYRAKGKSEVGKKGPGRPTGSKKKNEPEDEEEEEEEEDDEDEEEEDEDEE</sequence>
<protein>
    <recommendedName>
        <fullName>High mobility group protein B2</fullName>
    </recommendedName>
    <alternativeName>
        <fullName>High mobility group protein 2</fullName>
        <shortName>HMG-2</shortName>
    </alternativeName>
</protein>
<keyword id="KW-0007">Acetylation</keyword>
<keyword id="KW-0145">Chemotaxis</keyword>
<keyword id="KW-0158">Chromosome</keyword>
<keyword id="KW-0963">Cytoplasm</keyword>
<keyword id="KW-1015">Disulfide bond</keyword>
<keyword id="KW-0233">DNA recombination</keyword>
<keyword id="KW-0238">DNA-binding</keyword>
<keyword id="KW-0391">Immunity</keyword>
<keyword id="KW-0395">Inflammatory response</keyword>
<keyword id="KW-0399">Innate immunity</keyword>
<keyword id="KW-0539">Nucleus</keyword>
<keyword id="KW-0558">Oxidation</keyword>
<keyword id="KW-0597">Phosphoprotein</keyword>
<keyword id="KW-1185">Reference proteome</keyword>
<keyword id="KW-0677">Repeat</keyword>
<keyword id="KW-0964">Secreted</keyword>
<keyword id="KW-0804">Transcription</keyword>
<keyword id="KW-0805">Transcription regulation</keyword>
<accession>P52925</accession>
<accession>Q5FVP0</accession>
<reference key="1">
    <citation type="submission" date="1996-05" db="EMBL/GenBank/DDBJ databases">
        <title>Rat mRNA for chromosomal protein HMG2, complete cds.</title>
        <authorList>
            <person name="Yoshida M."/>
        </authorList>
    </citation>
    <scope>NUCLEOTIDE SEQUENCE [MRNA]</scope>
    <source>
        <strain>Fischer</strain>
    </source>
</reference>
<reference key="2">
    <citation type="journal article" date="2004" name="Genome Res.">
        <title>The status, quality, and expansion of the NIH full-length cDNA project: the Mammalian Gene Collection (MGC).</title>
        <authorList>
            <consortium name="The MGC Project Team"/>
        </authorList>
    </citation>
    <scope>NUCLEOTIDE SEQUENCE [LARGE SCALE MRNA]</scope>
    <source>
        <tissue>Spleen</tissue>
        <tissue>Testis</tissue>
        <tissue>Thymus</tissue>
    </source>
</reference>
<feature type="chain" id="PRO_0000048537" description="High mobility group protein B2">
    <location>
        <begin position="1"/>
        <end position="210"/>
    </location>
</feature>
<feature type="DNA-binding region" description="HMG box 1" evidence="6">
    <location>
        <begin position="9"/>
        <end position="79"/>
    </location>
</feature>
<feature type="DNA-binding region" description="HMG box 2" evidence="6">
    <location>
        <begin position="95"/>
        <end position="163"/>
    </location>
</feature>
<feature type="region of interest" description="Disordered" evidence="7">
    <location>
        <begin position="51"/>
        <end position="102"/>
    </location>
</feature>
<feature type="region of interest" description="Disordered" evidence="7">
    <location>
        <begin position="162"/>
        <end position="210"/>
    </location>
</feature>
<feature type="region of interest" description="Required for chemotactic activity" evidence="2">
    <location>
        <begin position="165"/>
        <end position="180"/>
    </location>
</feature>
<feature type="compositionally biased region" description="Basic and acidic residues" evidence="7">
    <location>
        <begin position="51"/>
        <end position="76"/>
    </location>
</feature>
<feature type="compositionally biased region" description="Basic and acidic residues" evidence="7">
    <location>
        <begin position="162"/>
        <end position="172"/>
    </location>
</feature>
<feature type="compositionally biased region" description="Acidic residues" evidence="7">
    <location>
        <begin position="187"/>
        <end position="210"/>
    </location>
</feature>
<feature type="modified residue" description="N6-acetyllysine" evidence="5">
    <location>
        <position position="3"/>
    </location>
</feature>
<feature type="modified residue" description="Cysteine sulfonic acid (-SO3H); alternate" evidence="5">
    <location>
        <position position="23"/>
    </location>
</feature>
<feature type="modified residue" description="N6-acetyllysine" evidence="2">
    <location>
        <position position="30"/>
    </location>
</feature>
<feature type="modified residue" description="Phosphoserine" evidence="2">
    <location>
        <position position="35"/>
    </location>
</feature>
<feature type="modified residue" description="N6-acetyllysine" evidence="4">
    <location>
        <position position="43"/>
    </location>
</feature>
<feature type="modified residue" description="Cysteine sulfonic acid (-SO3H); alternate" evidence="5">
    <location>
        <position position="45"/>
    </location>
</feature>
<feature type="modified residue" description="N6-acetyllysine" evidence="4">
    <location>
        <position position="90"/>
    </location>
</feature>
<feature type="modified residue" description="Phosphoserine" evidence="1">
    <location>
        <position position="100"/>
    </location>
</feature>
<feature type="modified residue" description="Cysteine sulfonic acid (-SO3H)" evidence="5">
    <location>
        <position position="106"/>
    </location>
</feature>
<feature type="modified residue" description="N6-acetyllysine" evidence="3">
    <location>
        <position position="114"/>
    </location>
</feature>
<feature type="modified residue" description="N6-acetyllysine" evidence="4">
    <location>
        <position position="141"/>
    </location>
</feature>
<feature type="disulfide bond" description="In disulfide HMGB2; alternate" evidence="5">
    <location>
        <begin position="23"/>
        <end position="45"/>
    </location>
</feature>
<name>HMGB2_RAT</name>
<organism>
    <name type="scientific">Rattus norvegicus</name>
    <name type="common">Rat</name>
    <dbReference type="NCBI Taxonomy" id="10116"/>
    <lineage>
        <taxon>Eukaryota</taxon>
        <taxon>Metazoa</taxon>
        <taxon>Chordata</taxon>
        <taxon>Craniata</taxon>
        <taxon>Vertebrata</taxon>
        <taxon>Euteleostomi</taxon>
        <taxon>Mammalia</taxon>
        <taxon>Eutheria</taxon>
        <taxon>Euarchontoglires</taxon>
        <taxon>Glires</taxon>
        <taxon>Rodentia</taxon>
        <taxon>Myomorpha</taxon>
        <taxon>Muroidea</taxon>
        <taxon>Muridae</taxon>
        <taxon>Murinae</taxon>
        <taxon>Rattus</taxon>
    </lineage>
</organism>
<evidence type="ECO:0000250" key="1">
    <source>
        <dbReference type="UniProtKB" id="P09429"/>
    </source>
</evidence>
<evidence type="ECO:0000250" key="2">
    <source>
        <dbReference type="UniProtKB" id="P26583"/>
    </source>
</evidence>
<evidence type="ECO:0000250" key="3">
    <source>
        <dbReference type="UniProtKB" id="P30681"/>
    </source>
</evidence>
<evidence type="ECO:0000250" key="4">
    <source>
        <dbReference type="UniProtKB" id="P63158"/>
    </source>
</evidence>
<evidence type="ECO:0000250" key="5">
    <source>
        <dbReference type="UniProtKB" id="P63159"/>
    </source>
</evidence>
<evidence type="ECO:0000255" key="6">
    <source>
        <dbReference type="PROSITE-ProRule" id="PRU00267"/>
    </source>
</evidence>
<evidence type="ECO:0000256" key="7">
    <source>
        <dbReference type="SAM" id="MobiDB-lite"/>
    </source>
</evidence>
<evidence type="ECO:0000305" key="8"/>